<organism>
    <name type="scientific">Lacticaseibacillus casei (strain BL23)</name>
    <name type="common">Lactobacillus casei</name>
    <dbReference type="NCBI Taxonomy" id="543734"/>
    <lineage>
        <taxon>Bacteria</taxon>
        <taxon>Bacillati</taxon>
        <taxon>Bacillota</taxon>
        <taxon>Bacilli</taxon>
        <taxon>Lactobacillales</taxon>
        <taxon>Lactobacillaceae</taxon>
        <taxon>Lacticaseibacillus</taxon>
    </lineage>
</organism>
<protein>
    <recommendedName>
        <fullName evidence="1">Probable potassium transport system protein Kup</fullName>
    </recommendedName>
</protein>
<evidence type="ECO:0000255" key="1">
    <source>
        <dbReference type="HAMAP-Rule" id="MF_01522"/>
    </source>
</evidence>
<feature type="chain" id="PRO_1000190273" description="Probable potassium transport system protein Kup">
    <location>
        <begin position="1"/>
        <end position="684"/>
    </location>
</feature>
<feature type="transmembrane region" description="Helical" evidence="1">
    <location>
        <begin position="19"/>
        <end position="39"/>
    </location>
</feature>
<feature type="transmembrane region" description="Helical" evidence="1">
    <location>
        <begin position="61"/>
        <end position="81"/>
    </location>
</feature>
<feature type="transmembrane region" description="Helical" evidence="1">
    <location>
        <begin position="104"/>
        <end position="124"/>
    </location>
</feature>
<feature type="transmembrane region" description="Helical" evidence="1">
    <location>
        <begin position="151"/>
        <end position="171"/>
    </location>
</feature>
<feature type="transmembrane region" description="Helical" evidence="1">
    <location>
        <begin position="177"/>
        <end position="197"/>
    </location>
</feature>
<feature type="transmembrane region" description="Helical" evidence="1">
    <location>
        <begin position="223"/>
        <end position="243"/>
    </location>
</feature>
<feature type="transmembrane region" description="Helical" evidence="1">
    <location>
        <begin position="255"/>
        <end position="275"/>
    </location>
</feature>
<feature type="transmembrane region" description="Helical" evidence="1">
    <location>
        <begin position="303"/>
        <end position="323"/>
    </location>
</feature>
<feature type="transmembrane region" description="Helical" evidence="1">
    <location>
        <begin position="352"/>
        <end position="372"/>
    </location>
</feature>
<feature type="transmembrane region" description="Helical" evidence="1">
    <location>
        <begin position="381"/>
        <end position="401"/>
    </location>
</feature>
<feature type="transmembrane region" description="Helical" evidence="1">
    <location>
        <begin position="407"/>
        <end position="427"/>
    </location>
</feature>
<feature type="transmembrane region" description="Helical" evidence="1">
    <location>
        <begin position="433"/>
        <end position="453"/>
    </location>
</feature>
<name>KUP_LACCB</name>
<reference key="1">
    <citation type="submission" date="2008-06" db="EMBL/GenBank/DDBJ databases">
        <title>Lactobacillus casei BL23 complete genome sequence.</title>
        <authorList>
            <person name="Maze A."/>
            <person name="Boel G."/>
            <person name="Bourand A."/>
            <person name="Loux V."/>
            <person name="Gibrat J.F."/>
            <person name="Zuniga M."/>
            <person name="Hartke A."/>
            <person name="Deutscher J."/>
        </authorList>
    </citation>
    <scope>NUCLEOTIDE SEQUENCE [LARGE SCALE GENOMIC DNA]</scope>
    <source>
        <strain>BL23</strain>
    </source>
</reference>
<keyword id="KW-1003">Cell membrane</keyword>
<keyword id="KW-0406">Ion transport</keyword>
<keyword id="KW-0472">Membrane</keyword>
<keyword id="KW-0630">Potassium</keyword>
<keyword id="KW-0633">Potassium transport</keyword>
<keyword id="KW-0769">Symport</keyword>
<keyword id="KW-0812">Transmembrane</keyword>
<keyword id="KW-1133">Transmembrane helix</keyword>
<keyword id="KW-0813">Transport</keyword>
<sequence length="684" mass="76719">MASGLTANKKLRHKITAAALLVTLGVVYGDIGTSPLYVMKSIVAGNGGMGHFDTDFLVGSVSLIFWTLLIITTVKYVLIALRADNNGEGGIFALYTLVRQRARWLVLPAMVGGAALLADGMLTPAVTVTTAIEGLKGVHINGNILIDNQQQVIWVTILIITFLFFIQRFGTDLIGKAFGPIMFVWFTFLGVAGFIALSKDWSMLRALNPYYALHLLVSPDNKMGLFILGSIFLATTGAEALYSDMGHVGRGNIYLSWPYVNICLVLNYFGQAVWLDQNSKVTAFNKITDFNPFFQMLPESIRLGAIILATLAAIIASQALISGSYTLVSEAIKLRFLPRLHIIYPTRLKGQLYIPVVNTILWLACLAIIGYFKTSAEMEGAYGLAITITMLMTTLLLYQYLRSRHAPAVIAIGTLIFFSAIETVFFISSAVKFLHGGYVTAMIAFIILAVMYVWQYGGRIRDDNTYRAEMASLFAYKNQLSELRNDPDYPTYTTNLVYMTQIANDHYIKKEILYSILDKRPKRARVYWFVTVNVTDEPYTAEYTTDTYGTDYMVNVQLYLGFRMEQQVNVFLRQIVNDMMREGELPTQPQKYTTIPDRQVGDWTFVLLHEELSPQTQIKGFQKAIIQARLRLQHIAVSPAQWFGLEYADTIDETVPLVLGKIPITKLNRLTRSQAEAQPEDEDD</sequence>
<dbReference type="EMBL" id="FM177140">
    <property type="protein sequence ID" value="CAQ67584.1"/>
    <property type="molecule type" value="Genomic_DNA"/>
</dbReference>
<dbReference type="KEGG" id="lcb:LCABL_25180"/>
<dbReference type="HOGENOM" id="CLU_008142_4_1_9"/>
<dbReference type="GO" id="GO:0005886">
    <property type="term" value="C:plasma membrane"/>
    <property type="evidence" value="ECO:0007669"/>
    <property type="project" value="UniProtKB-SubCell"/>
</dbReference>
<dbReference type="GO" id="GO:0015079">
    <property type="term" value="F:potassium ion transmembrane transporter activity"/>
    <property type="evidence" value="ECO:0007669"/>
    <property type="project" value="UniProtKB-UniRule"/>
</dbReference>
<dbReference type="GO" id="GO:0015293">
    <property type="term" value="F:symporter activity"/>
    <property type="evidence" value="ECO:0007669"/>
    <property type="project" value="UniProtKB-UniRule"/>
</dbReference>
<dbReference type="HAMAP" id="MF_01522">
    <property type="entry name" value="Kup"/>
    <property type="match status" value="1"/>
</dbReference>
<dbReference type="InterPro" id="IPR003855">
    <property type="entry name" value="K+_transporter"/>
</dbReference>
<dbReference type="InterPro" id="IPR053952">
    <property type="entry name" value="K_trans_C"/>
</dbReference>
<dbReference type="InterPro" id="IPR053951">
    <property type="entry name" value="K_trans_N"/>
</dbReference>
<dbReference type="InterPro" id="IPR023051">
    <property type="entry name" value="Kup"/>
</dbReference>
<dbReference type="PANTHER" id="PTHR30540:SF83">
    <property type="entry name" value="K+ POTASSIUM TRANSPORTER"/>
    <property type="match status" value="1"/>
</dbReference>
<dbReference type="PANTHER" id="PTHR30540">
    <property type="entry name" value="OSMOTIC STRESS POTASSIUM TRANSPORTER"/>
    <property type="match status" value="1"/>
</dbReference>
<dbReference type="Pfam" id="PF02705">
    <property type="entry name" value="K_trans"/>
    <property type="match status" value="1"/>
</dbReference>
<dbReference type="Pfam" id="PF22776">
    <property type="entry name" value="K_trans_C"/>
    <property type="match status" value="1"/>
</dbReference>
<accession>B3WA65</accession>
<proteinExistence type="inferred from homology"/>
<gene>
    <name evidence="1" type="primary">kup</name>
    <name type="ordered locus">LCABL_25180</name>
</gene>
<comment type="function">
    <text evidence="1">Transport of potassium into the cell. Likely operates as a K(+):H(+) symporter.</text>
</comment>
<comment type="catalytic activity">
    <reaction evidence="1">
        <text>K(+)(in) + H(+)(in) = K(+)(out) + H(+)(out)</text>
        <dbReference type="Rhea" id="RHEA:28490"/>
        <dbReference type="ChEBI" id="CHEBI:15378"/>
        <dbReference type="ChEBI" id="CHEBI:29103"/>
    </reaction>
    <physiologicalReaction direction="right-to-left" evidence="1">
        <dbReference type="Rhea" id="RHEA:28492"/>
    </physiologicalReaction>
</comment>
<comment type="subcellular location">
    <subcellularLocation>
        <location evidence="1">Cell membrane</location>
        <topology evidence="1">Multi-pass membrane protein</topology>
    </subcellularLocation>
</comment>
<comment type="similarity">
    <text evidence="1">Belongs to the HAK/KUP transporter (TC 2.A.72) family.</text>
</comment>